<keyword id="KW-0235">DNA replication</keyword>
<keyword id="KW-0239">DNA-directed DNA polymerase</keyword>
<keyword id="KW-0548">Nucleotidyltransferase</keyword>
<keyword id="KW-1185">Reference proteome</keyword>
<keyword id="KW-0808">Transferase</keyword>
<keyword id="KW-1194">Viral DNA replication</keyword>
<organismHost>
    <name type="scientific">Acinetobacter baumannii</name>
    <dbReference type="NCBI Taxonomy" id="470"/>
</organismHost>
<reference key="1">
    <citation type="journal article" date="2019" name="Acta Biochim. Biophys. Sin.">
        <title>Characterization and whole genome analysis of a novel bacteriophage SH-Ab 15497 against multidrug resistant Acinetobacater baummanii.</title>
        <authorList>
            <person name="Hua Y."/>
            <person name="Xu M."/>
            <person name="Wang R."/>
            <person name="Zhang Y."/>
            <person name="Zhu Z."/>
            <person name="Guo M."/>
            <person name="He P."/>
        </authorList>
    </citation>
    <scope>NUCLEOTIDE SEQUENCE [LARGE SCALE GENOMIC DNA]</scope>
</reference>
<reference key="2">
    <citation type="journal article" date="2021" name="Science">
        <title>Noncanonical DNA polymerization by aminoadenine-based siphoviruses.</title>
        <authorList>
            <person name="Pezo V."/>
            <person name="Jaziri F."/>
            <person name="Bourguignon P.Y."/>
            <person name="Louis D."/>
            <person name="Jacobs-Sera D."/>
            <person name="Rozenski J."/>
            <person name="Pochet S."/>
            <person name="Herdewijn P."/>
            <person name="Hatfull G.F."/>
            <person name="Kaminski P.A."/>
            <person name="Marliere P."/>
        </authorList>
    </citation>
    <scope>FUNCTION</scope>
    <scope>CATALYTIC ACTIVITY</scope>
    <scope>BIOPHYSICOCHEMICAL PROPERTIES</scope>
</reference>
<evidence type="ECO:0000269" key="1">
    <source>
    </source>
</evidence>
<evidence type="ECO:0000303" key="2">
    <source>
    </source>
</evidence>
<evidence type="ECO:0000305" key="3"/>
<dbReference type="EMBL" id="MG674163">
    <property type="protein sequence ID" value="AUG85479.1"/>
    <property type="molecule type" value="Genomic_DNA"/>
</dbReference>
<dbReference type="SMR" id="A0A2H5BHJ5"/>
<dbReference type="Proteomes" id="UP000241732">
    <property type="component" value="Genome"/>
</dbReference>
<dbReference type="GO" id="GO:0008408">
    <property type="term" value="F:3'-5' exonuclease activity"/>
    <property type="evidence" value="ECO:0007669"/>
    <property type="project" value="InterPro"/>
</dbReference>
<dbReference type="GO" id="GO:0003677">
    <property type="term" value="F:DNA binding"/>
    <property type="evidence" value="ECO:0007669"/>
    <property type="project" value="InterPro"/>
</dbReference>
<dbReference type="GO" id="GO:0003887">
    <property type="term" value="F:DNA-directed DNA polymerase activity"/>
    <property type="evidence" value="ECO:0007669"/>
    <property type="project" value="UniProtKB-KW"/>
</dbReference>
<dbReference type="GO" id="GO:0006261">
    <property type="term" value="P:DNA-templated DNA replication"/>
    <property type="evidence" value="ECO:0007669"/>
    <property type="project" value="InterPro"/>
</dbReference>
<dbReference type="GO" id="GO:0006302">
    <property type="term" value="P:double-strand break repair"/>
    <property type="evidence" value="ECO:0007669"/>
    <property type="project" value="TreeGrafter"/>
</dbReference>
<dbReference type="GO" id="GO:0039693">
    <property type="term" value="P:viral DNA genome replication"/>
    <property type="evidence" value="ECO:0007669"/>
    <property type="project" value="UniProtKB-KW"/>
</dbReference>
<dbReference type="Gene3D" id="3.30.70.370">
    <property type="match status" value="1"/>
</dbReference>
<dbReference type="Gene3D" id="1.10.150.20">
    <property type="entry name" value="5' to 3' exonuclease, C-terminal subdomain"/>
    <property type="match status" value="1"/>
</dbReference>
<dbReference type="Gene3D" id="3.30.420.10">
    <property type="entry name" value="Ribonuclease H-like superfamily/Ribonuclease H"/>
    <property type="match status" value="1"/>
</dbReference>
<dbReference type="Gene3D" id="1.20.1060.10">
    <property type="entry name" value="Taq DNA Polymerase, Chain T, domain 4"/>
    <property type="match status" value="1"/>
</dbReference>
<dbReference type="InterPro" id="IPR002562">
    <property type="entry name" value="3'-5'_exonuclease_dom"/>
</dbReference>
<dbReference type="InterPro" id="IPR001098">
    <property type="entry name" value="DNA-dir_DNA_pol_A_palm_dom"/>
</dbReference>
<dbReference type="InterPro" id="IPR043502">
    <property type="entry name" value="DNA/RNA_pol_sf"/>
</dbReference>
<dbReference type="InterPro" id="IPR002298">
    <property type="entry name" value="DNA_polymerase_A"/>
</dbReference>
<dbReference type="InterPro" id="IPR012337">
    <property type="entry name" value="RNaseH-like_sf"/>
</dbReference>
<dbReference type="InterPro" id="IPR036397">
    <property type="entry name" value="RNaseH_sf"/>
</dbReference>
<dbReference type="NCBIfam" id="NF038380">
    <property type="entry name" value="phage_DpoZ_1"/>
    <property type="match status" value="1"/>
</dbReference>
<dbReference type="PANTHER" id="PTHR10133">
    <property type="entry name" value="DNA POLYMERASE I"/>
    <property type="match status" value="1"/>
</dbReference>
<dbReference type="PANTHER" id="PTHR10133:SF27">
    <property type="entry name" value="DNA POLYMERASE NU"/>
    <property type="match status" value="1"/>
</dbReference>
<dbReference type="Pfam" id="PF00476">
    <property type="entry name" value="DNA_pol_A"/>
    <property type="match status" value="1"/>
</dbReference>
<dbReference type="Pfam" id="PF01612">
    <property type="entry name" value="DNA_pol_A_exo1"/>
    <property type="match status" value="1"/>
</dbReference>
<dbReference type="PRINTS" id="PR00868">
    <property type="entry name" value="DNAPOLI"/>
</dbReference>
<dbReference type="SMART" id="SM00482">
    <property type="entry name" value="POLAc"/>
    <property type="match status" value="1"/>
</dbReference>
<dbReference type="SUPFAM" id="SSF56672">
    <property type="entry name" value="DNA/RNA polymerases"/>
    <property type="match status" value="1"/>
</dbReference>
<dbReference type="SUPFAM" id="SSF53098">
    <property type="entry name" value="Ribonuclease H-like"/>
    <property type="match status" value="1"/>
</dbReference>
<organism>
    <name type="scientific">Acinetobacter phage SH-Ab 15497</name>
    <dbReference type="NCBI Taxonomy" id="2060946"/>
    <lineage>
        <taxon>Viruses</taxon>
        <taxon>Duplodnaviria</taxon>
        <taxon>Heunggongvirae</taxon>
        <taxon>Uroviricota</taxon>
        <taxon>Caudoviricetes</taxon>
    </lineage>
</organism>
<gene>
    <name type="primary">dpoZ</name>
    <name type="ORF">SHab15497_00037</name>
</gene>
<feature type="chain" id="PRO_0000453687" description="DNA polymerase DpoZ">
    <location>
        <begin position="1"/>
        <end position="624"/>
    </location>
</feature>
<name>DPOZ_BPSHA</name>
<proteinExistence type="evidence at protein level"/>
<protein>
    <recommendedName>
        <fullName evidence="2">DNA polymerase DpoZ</fullName>
    </recommendedName>
</protein>
<comment type="function">
    <text evidence="1">DNA polymerase that preferentially incorporates the non-canonical base aminoadenine/dZTP instead of adenine into the synthesized DNA (PubMed:33926956). 29 times as efficient in using dZTP instead of dATP as a substrate (PubMed:33926956). In addition to this preference for dZTP, the phage also encodes a dATP triphosphohydrolase that removes dATP and its precursor dADP from the nucleotide pool of the host (PubMed:33926956).</text>
</comment>
<comment type="catalytic activity">
    <reaction evidence="1">
        <text>DNA(n) + a 2'-deoxyribonucleoside 5'-triphosphate = DNA(n+1) + diphosphate</text>
        <dbReference type="Rhea" id="RHEA:22508"/>
        <dbReference type="Rhea" id="RHEA-COMP:17339"/>
        <dbReference type="Rhea" id="RHEA-COMP:17340"/>
        <dbReference type="ChEBI" id="CHEBI:33019"/>
        <dbReference type="ChEBI" id="CHEBI:61560"/>
        <dbReference type="ChEBI" id="CHEBI:173112"/>
    </reaction>
</comment>
<comment type="catalytic activity">
    <reaction evidence="1">
        <text>dZTP + DNA(n) = DNA(n)-Z + diphosphate</text>
        <dbReference type="Rhea" id="RHEA:67728"/>
        <dbReference type="Rhea" id="RHEA-COMP:17339"/>
        <dbReference type="Rhea" id="RHEA-COMP:17341"/>
        <dbReference type="ChEBI" id="CHEBI:33019"/>
        <dbReference type="ChEBI" id="CHEBI:172931"/>
        <dbReference type="ChEBI" id="CHEBI:172959"/>
        <dbReference type="ChEBI" id="CHEBI:173112"/>
    </reaction>
</comment>
<comment type="biophysicochemical properties">
    <kinetics>
        <KM evidence="1">1.3 uM for dZTP</KM>
        <KM evidence="1">21.4 uM for dATP</KM>
    </kinetics>
</comment>
<comment type="similarity">
    <text evidence="3">Belongs to the DNA polymerase type-A family. DpoZ subfamily.</text>
</comment>
<accession>A0A2H5BHJ5</accession>
<sequence>MAFPNIEQYPQISVDCESTGLEWYKEDRAFGVSIYLPTGDAEYYDIRKDRNAFHWMKDNLWKAKKIVNHNIKFDIHMLRATGINLNPANCECTMIRAALIDEHLLKYDLDSLLKKYLKMSKDNDIYADLAQIFGGQPTRKVQILNLHRAPVDLVARYANIDTEGAYKLWEWQEGEIERQDLHQVWQLERRLFRHIVEMERRGIRIDPNEANRRAEELDRVTAETVAELNRLAGFEVNPNPSGSIKKLFNPKQNEAGIWVARDGTPLPKTDSGAPSLGAKSLESMTDPCAKLILKARKLNKTKDTFIRGHVLGHAIQNGQDWFVHPNINQTKSDTGDGSEGTGTGRLSYTRPALQQIPSRDKEIASIVRPIFLPDRGQKWSYGDLDQHEFRIFAHYANPKDIIEAYAQNPDLDMHQIVADLTGMPRSATKAGEANAKQINLGMVFNMGAGELASQMGLPFTIESVDFGDHVHDLKKAGPETLEIVENYYAKVQGVKEMARKARTIAKSRGYVRTLMGRHIRFPRGMFTYKASGLIFQGTAGDLNKLNICNIAEYLESECPYNRLLLNIHDEYSVSLEDDGKEIKHLKELQGLVQHRPELRVPIRIDFSHPAPNWWLATRADLATK</sequence>